<name>TMOW_RUEPO</name>
<organism>
    <name type="scientific">Ruegeria pomeroyi (strain ATCC 700808 / DSM 15171 / DSS-3)</name>
    <name type="common">Silicibacter pomeroyi</name>
    <dbReference type="NCBI Taxonomy" id="246200"/>
    <lineage>
        <taxon>Bacteria</taxon>
        <taxon>Pseudomonadati</taxon>
        <taxon>Pseudomonadota</taxon>
        <taxon>Alphaproteobacteria</taxon>
        <taxon>Rhodobacterales</taxon>
        <taxon>Roseobacteraceae</taxon>
        <taxon>Ruegeria</taxon>
    </lineage>
</organism>
<comment type="function">
    <text evidence="2 4">Part of the ABC transporter complex TmoXWV involved in trimethylamine N-oxide (TMAO) import (PubMed:24550299). Responsible for energy coupling to the transport system (Probable). Is specific for TMAO and essential for TMAO metabolism (PubMed:24550299).</text>
</comment>
<comment type="catalytic activity">
    <reaction evidence="5">
        <text>a quaternary ammonium(out) + ATP + H2O = a quaternary ammonium(in) + ADP + phosphate + H(+)</text>
        <dbReference type="Rhea" id="RHEA:11036"/>
        <dbReference type="ChEBI" id="CHEBI:15377"/>
        <dbReference type="ChEBI" id="CHEBI:15378"/>
        <dbReference type="ChEBI" id="CHEBI:30616"/>
        <dbReference type="ChEBI" id="CHEBI:35267"/>
        <dbReference type="ChEBI" id="CHEBI:43474"/>
        <dbReference type="ChEBI" id="CHEBI:456216"/>
        <dbReference type="EC" id="7.6.2.9"/>
    </reaction>
    <physiologicalReaction direction="left-to-right" evidence="5">
        <dbReference type="Rhea" id="RHEA:11037"/>
    </physiologicalReaction>
</comment>
<comment type="subunit">
    <text evidence="5">The complex is probably composed of two ATP-binding proteins (TmoW), two transmembrane proteins (TmoV) and a solute-binding protein (TmoX).</text>
</comment>
<comment type="subcellular location">
    <subcellularLocation>
        <location evidence="4">Cell inner membrane</location>
        <topology evidence="4">Peripheral membrane protein</topology>
    </subcellularLocation>
</comment>
<comment type="induction">
    <text evidence="2">Expression is induced by TMAO.</text>
</comment>
<comment type="disruption phenotype">
    <text evidence="2">The double mutant tmoXW shows significant reduced growth on TMAO as a sole nitrogen source (PubMed:24550299). Growth on trimethylamine (TMA), glycine betaine (GBT), choline and carnitine is unaffected (PubMed:24550299).</text>
</comment>
<comment type="similarity">
    <text evidence="4">Belongs to the ABC transporter superfamily.</text>
</comment>
<accession>Q5LT65</accession>
<feature type="chain" id="PRO_0000458083" description="Trimethylamine N-oxide transport system ATP-binding protein TmoW">
    <location>
        <begin position="1"/>
        <end position="340"/>
    </location>
</feature>
<feature type="domain" description="ABC transporter" evidence="1">
    <location>
        <begin position="32"/>
        <end position="268"/>
    </location>
</feature>
<feature type="binding site" evidence="1">
    <location>
        <begin position="64"/>
        <end position="71"/>
    </location>
    <ligand>
        <name>ATP</name>
        <dbReference type="ChEBI" id="CHEBI:30616"/>
    </ligand>
</feature>
<dbReference type="EC" id="7.6.2.9" evidence="5"/>
<dbReference type="EMBL" id="CP000031">
    <property type="protein sequence ID" value="AAV94836.1"/>
    <property type="molecule type" value="Genomic_DNA"/>
</dbReference>
<dbReference type="SMR" id="Q5LT65"/>
<dbReference type="STRING" id="246200.SPO1549"/>
<dbReference type="PaxDb" id="246200-SPO1549"/>
<dbReference type="KEGG" id="sil:SPO1549"/>
<dbReference type="eggNOG" id="COG4175">
    <property type="taxonomic scope" value="Bacteria"/>
</dbReference>
<dbReference type="HOGENOM" id="CLU_000604_1_22_5"/>
<dbReference type="Proteomes" id="UP000001023">
    <property type="component" value="Chromosome"/>
</dbReference>
<dbReference type="GO" id="GO:0005886">
    <property type="term" value="C:plasma membrane"/>
    <property type="evidence" value="ECO:0007669"/>
    <property type="project" value="UniProtKB-SubCell"/>
</dbReference>
<dbReference type="GO" id="GO:0015418">
    <property type="term" value="F:ABC-type quaternary ammonium compound transporting activity"/>
    <property type="evidence" value="ECO:0007669"/>
    <property type="project" value="RHEA"/>
</dbReference>
<dbReference type="GO" id="GO:0005524">
    <property type="term" value="F:ATP binding"/>
    <property type="evidence" value="ECO:0007669"/>
    <property type="project" value="UniProtKB-KW"/>
</dbReference>
<dbReference type="GO" id="GO:0016887">
    <property type="term" value="F:ATP hydrolysis activity"/>
    <property type="evidence" value="ECO:0007669"/>
    <property type="project" value="InterPro"/>
</dbReference>
<dbReference type="GO" id="GO:0031460">
    <property type="term" value="P:glycine betaine transport"/>
    <property type="evidence" value="ECO:0007669"/>
    <property type="project" value="InterPro"/>
</dbReference>
<dbReference type="FunFam" id="3.40.50.300:FF:000201">
    <property type="entry name" value="Glycine betaine/L-proline ABC transporter ATP-binding protein"/>
    <property type="match status" value="1"/>
</dbReference>
<dbReference type="Gene3D" id="3.40.50.300">
    <property type="entry name" value="P-loop containing nucleotide triphosphate hydrolases"/>
    <property type="match status" value="1"/>
</dbReference>
<dbReference type="InterPro" id="IPR003593">
    <property type="entry name" value="AAA+_ATPase"/>
</dbReference>
<dbReference type="InterPro" id="IPR051921">
    <property type="entry name" value="ABC_osmolyte_uptake_ATP-bind"/>
</dbReference>
<dbReference type="InterPro" id="IPR003439">
    <property type="entry name" value="ABC_transporter-like_ATP-bd"/>
</dbReference>
<dbReference type="InterPro" id="IPR017871">
    <property type="entry name" value="ABC_transporter-like_CS"/>
</dbReference>
<dbReference type="InterPro" id="IPR005892">
    <property type="entry name" value="Gly-betaine_transp_ATP-bd"/>
</dbReference>
<dbReference type="InterPro" id="IPR027417">
    <property type="entry name" value="P-loop_NTPase"/>
</dbReference>
<dbReference type="NCBIfam" id="TIGR01186">
    <property type="entry name" value="proV"/>
    <property type="match status" value="1"/>
</dbReference>
<dbReference type="PANTHER" id="PTHR43869">
    <property type="entry name" value="GLYCINE BETAINE/PROLINE BETAINE TRANSPORT SYSTEM ATP-BINDING PROTEIN PROV"/>
    <property type="match status" value="1"/>
</dbReference>
<dbReference type="PANTHER" id="PTHR43869:SF1">
    <property type="entry name" value="GLYCINE BETAINE_PROLINE BETAINE TRANSPORT SYSTEM ATP-BINDING PROTEIN PROV"/>
    <property type="match status" value="1"/>
</dbReference>
<dbReference type="Pfam" id="PF00005">
    <property type="entry name" value="ABC_tran"/>
    <property type="match status" value="1"/>
</dbReference>
<dbReference type="SMART" id="SM00382">
    <property type="entry name" value="AAA"/>
    <property type="match status" value="1"/>
</dbReference>
<dbReference type="SUPFAM" id="SSF52540">
    <property type="entry name" value="P-loop containing nucleoside triphosphate hydrolases"/>
    <property type="match status" value="1"/>
</dbReference>
<dbReference type="PROSITE" id="PS00211">
    <property type="entry name" value="ABC_TRANSPORTER_1"/>
    <property type="match status" value="1"/>
</dbReference>
<dbReference type="PROSITE" id="PS50893">
    <property type="entry name" value="ABC_TRANSPORTER_2"/>
    <property type="match status" value="1"/>
</dbReference>
<evidence type="ECO:0000255" key="1">
    <source>
        <dbReference type="PROSITE-ProRule" id="PRU00434"/>
    </source>
</evidence>
<evidence type="ECO:0000269" key="2">
    <source>
    </source>
</evidence>
<evidence type="ECO:0000303" key="3">
    <source>
    </source>
</evidence>
<evidence type="ECO:0000305" key="4"/>
<evidence type="ECO:0000305" key="5">
    <source>
    </source>
</evidence>
<evidence type="ECO:0000312" key="6">
    <source>
        <dbReference type="EMBL" id="AAV94836.1"/>
    </source>
</evidence>
<proteinExistence type="evidence at protein level"/>
<sequence length="340" mass="37551">MRFMGSPVISARNVWKIFGKDPVGYLKTLQPGRSFDDIRADGYIAGVRDVSLDVARGEMLVIMGLSGSGKSTLVRCFSRLHEITGGSIEVDGQIIGDLSEKDLIELRRNKMGMVFQSFGLLPHRTVLDNVAFPLEMRGQDRHTRRKRALEVIELVGLAGREDYFPRELSGGQQQRVGIARSLAIEPDIWFLDEPFSALDPLIRREMQDEFLRLQAMLGKTIVFITHDFDEALRLADRIAIMKDGAVEQCDTPDQIVMNPTTGYVAKFTEEIDKARVVHAGVLARAGVVGEGQPVEAGATVQQLARLLVNDSRDLIPVADKGQVIGALDRQGALDILLKAS</sequence>
<protein>
    <recommendedName>
        <fullName evidence="4">Trimethylamine N-oxide transport system ATP-binding protein TmoW</fullName>
        <shortName evidence="4">TMAO transport system ATP-binding protein TmoW</shortName>
        <ecNumber evidence="5">7.6.2.9</ecNumber>
    </recommendedName>
</protein>
<reference key="1">
    <citation type="journal article" date="2004" name="Nature">
        <title>Genome sequence of Silicibacter pomeroyi reveals adaptations to the marine environment.</title>
        <authorList>
            <person name="Moran M.A."/>
            <person name="Buchan A."/>
            <person name="Gonzalez J.M."/>
            <person name="Heidelberg J.F."/>
            <person name="Whitman W.B."/>
            <person name="Kiene R.P."/>
            <person name="Henriksen J.R."/>
            <person name="King G.M."/>
            <person name="Belas R."/>
            <person name="Fuqua C."/>
            <person name="Brinkac L.M."/>
            <person name="Lewis M."/>
            <person name="Johri S."/>
            <person name="Weaver B."/>
            <person name="Pai G."/>
            <person name="Eisen J.A."/>
            <person name="Rahe E."/>
            <person name="Sheldon W.M."/>
            <person name="Ye W."/>
            <person name="Miller T.R."/>
            <person name="Carlton J."/>
            <person name="Rasko D.A."/>
            <person name="Paulsen I.T."/>
            <person name="Ren Q."/>
            <person name="Daugherty S.C."/>
            <person name="DeBoy R.T."/>
            <person name="Dodson R.J."/>
            <person name="Durkin A.S."/>
            <person name="Madupu R."/>
            <person name="Nelson W.C."/>
            <person name="Sullivan S.A."/>
            <person name="Rosovitz M.J."/>
            <person name="Haft D.H."/>
            <person name="Selengut J."/>
            <person name="Ward N."/>
        </authorList>
    </citation>
    <scope>NUCLEOTIDE SEQUENCE [LARGE SCALE GENOMIC DNA]</scope>
    <source>
        <strain>ATCC 700808 / DSM 15171 / DSS-3</strain>
    </source>
</reference>
<reference key="2">
    <citation type="journal article" date="2014" name="Stand. Genomic Sci.">
        <title>An updated genome annotation for the model marine bacterium Ruegeria pomeroyi DSS-3.</title>
        <authorList>
            <person name="Rivers A.R."/>
            <person name="Smith C.B."/>
            <person name="Moran M.A."/>
        </authorList>
    </citation>
    <scope>GENOME REANNOTATION</scope>
    <source>
        <strain>ATCC 700808 / DSM 15171 / DSS-3</strain>
    </source>
</reference>
<reference key="3">
    <citation type="journal article" date="2014" name="Proc. Natl. Acad. Sci. U.S.A.">
        <title>Trimethylamine N-oxide metabolism by abundant marine heterotrophic bacteria.</title>
        <authorList>
            <person name="Lidbury I."/>
            <person name="Murrell J.C."/>
            <person name="Chen Y."/>
        </authorList>
    </citation>
    <scope>FUNCTION IN TMAO TRANSPORT</scope>
    <scope>INDUCTION</scope>
    <scope>DISRUPTION PHENOTYPE</scope>
    <source>
        <strain>ATCC 700808 / DSM 15171 / DSS-3</strain>
    </source>
</reference>
<gene>
    <name evidence="3" type="primary">tmoW</name>
    <name evidence="6" type="ordered locus">SPO1549</name>
</gene>
<keyword id="KW-0067">ATP-binding</keyword>
<keyword id="KW-0997">Cell inner membrane</keyword>
<keyword id="KW-1003">Cell membrane</keyword>
<keyword id="KW-0472">Membrane</keyword>
<keyword id="KW-0547">Nucleotide-binding</keyword>
<keyword id="KW-1185">Reference proteome</keyword>
<keyword id="KW-1278">Translocase</keyword>
<keyword id="KW-0813">Transport</keyword>